<gene>
    <name evidence="1" type="primary">fdhE</name>
    <name type="ordered locus">YPN_3702</name>
    <name type="ORF">YP516_4207</name>
</gene>
<sequence>MSIRIVPKDQLGKQREKGTTAGNIPPLLFANLKSLYTRRTERLQQLALDNPLADYLDFAAKITEAQQKALHDHPLVLDMQAELVQSAASGKPPLDGSVFPRTEHWRKLLSALIAELRHDAPDHILAVLDNLDKASVHELELYADALLNRDFSQVGSEKAPFIWAALSLYWAQMASQIPGKARAEYGEHRQFCPVCGSIPVSSVVHIGTHNGLRYLHCNLCESEWHVVRIKCSNCEQTRDLNYWSLDSELAAVKAESCGDCGTYLKILYQEKDPQVEAVADDLASLILDAKMEGEGFARSSINPFLFPGE</sequence>
<keyword id="KW-0963">Cytoplasm</keyword>
<organism>
    <name type="scientific">Yersinia pestis bv. Antiqua (strain Nepal516)</name>
    <dbReference type="NCBI Taxonomy" id="377628"/>
    <lineage>
        <taxon>Bacteria</taxon>
        <taxon>Pseudomonadati</taxon>
        <taxon>Pseudomonadota</taxon>
        <taxon>Gammaproteobacteria</taxon>
        <taxon>Enterobacterales</taxon>
        <taxon>Yersiniaceae</taxon>
        <taxon>Yersinia</taxon>
    </lineage>
</organism>
<accession>Q1CDA1</accession>
<accession>D1Q252</accession>
<name>FDHE_YERPN</name>
<evidence type="ECO:0000255" key="1">
    <source>
        <dbReference type="HAMAP-Rule" id="MF_00611"/>
    </source>
</evidence>
<dbReference type="EMBL" id="CP000305">
    <property type="protein sequence ID" value="ABG20029.1"/>
    <property type="molecule type" value="Genomic_DNA"/>
</dbReference>
<dbReference type="EMBL" id="ACNQ01000019">
    <property type="protein sequence ID" value="EEO74605.1"/>
    <property type="molecule type" value="Genomic_DNA"/>
</dbReference>
<dbReference type="RefSeq" id="WP_002209609.1">
    <property type="nucleotide sequence ID" value="NZ_ACNQ01000019.1"/>
</dbReference>
<dbReference type="SMR" id="Q1CDA1"/>
<dbReference type="GeneID" id="57974659"/>
<dbReference type="KEGG" id="ypn:YPN_3702"/>
<dbReference type="HOGENOM" id="CLU_055275_0_0_6"/>
<dbReference type="Proteomes" id="UP000008936">
    <property type="component" value="Chromosome"/>
</dbReference>
<dbReference type="GO" id="GO:0005829">
    <property type="term" value="C:cytosol"/>
    <property type="evidence" value="ECO:0007669"/>
    <property type="project" value="TreeGrafter"/>
</dbReference>
<dbReference type="GO" id="GO:0008199">
    <property type="term" value="F:ferric iron binding"/>
    <property type="evidence" value="ECO:0007669"/>
    <property type="project" value="TreeGrafter"/>
</dbReference>
<dbReference type="GO" id="GO:0051604">
    <property type="term" value="P:protein maturation"/>
    <property type="evidence" value="ECO:0007669"/>
    <property type="project" value="TreeGrafter"/>
</dbReference>
<dbReference type="CDD" id="cd16341">
    <property type="entry name" value="FdhE"/>
    <property type="match status" value="1"/>
</dbReference>
<dbReference type="FunFam" id="3.90.1670.10:FF:000001">
    <property type="entry name" value="Protein FdhE"/>
    <property type="match status" value="1"/>
</dbReference>
<dbReference type="Gene3D" id="3.90.1670.10">
    <property type="entry name" value="FdhE-like domain"/>
    <property type="match status" value="1"/>
</dbReference>
<dbReference type="HAMAP" id="MF_00611">
    <property type="entry name" value="FdeH"/>
    <property type="match status" value="1"/>
</dbReference>
<dbReference type="InterPro" id="IPR024064">
    <property type="entry name" value="FdhE-like_sf"/>
</dbReference>
<dbReference type="InterPro" id="IPR056796">
    <property type="entry name" value="FdhE_C"/>
</dbReference>
<dbReference type="InterPro" id="IPR056797">
    <property type="entry name" value="FdhE_central"/>
</dbReference>
<dbReference type="InterPro" id="IPR056774">
    <property type="entry name" value="FdhE_N"/>
</dbReference>
<dbReference type="InterPro" id="IPR006452">
    <property type="entry name" value="Formate_DH_accessory"/>
</dbReference>
<dbReference type="NCBIfam" id="TIGR01562">
    <property type="entry name" value="FdhE"/>
    <property type="match status" value="1"/>
</dbReference>
<dbReference type="NCBIfam" id="NF002925">
    <property type="entry name" value="PRK03564.1"/>
    <property type="match status" value="1"/>
</dbReference>
<dbReference type="PANTHER" id="PTHR37689">
    <property type="entry name" value="PROTEIN FDHE"/>
    <property type="match status" value="1"/>
</dbReference>
<dbReference type="PANTHER" id="PTHR37689:SF1">
    <property type="entry name" value="PROTEIN FDHE"/>
    <property type="match status" value="1"/>
</dbReference>
<dbReference type="Pfam" id="PF24860">
    <property type="entry name" value="FdhE_C"/>
    <property type="match status" value="1"/>
</dbReference>
<dbReference type="Pfam" id="PF24859">
    <property type="entry name" value="FdhE_central"/>
    <property type="match status" value="1"/>
</dbReference>
<dbReference type="Pfam" id="PF04216">
    <property type="entry name" value="FdhE_N"/>
    <property type="match status" value="1"/>
</dbReference>
<dbReference type="PIRSF" id="PIRSF018296">
    <property type="entry name" value="Format_dh_formtn"/>
    <property type="match status" value="1"/>
</dbReference>
<dbReference type="SUPFAM" id="SSF144020">
    <property type="entry name" value="FdhE-like"/>
    <property type="match status" value="1"/>
</dbReference>
<protein>
    <recommendedName>
        <fullName evidence="1">Protein FdhE homolog</fullName>
    </recommendedName>
</protein>
<proteinExistence type="inferred from homology"/>
<reference key="1">
    <citation type="journal article" date="2006" name="J. Bacteriol.">
        <title>Complete genome sequence of Yersinia pestis strains Antiqua and Nepal516: evidence of gene reduction in an emerging pathogen.</title>
        <authorList>
            <person name="Chain P.S.G."/>
            <person name="Hu P."/>
            <person name="Malfatti S.A."/>
            <person name="Radnedge L."/>
            <person name="Larimer F."/>
            <person name="Vergez L.M."/>
            <person name="Worsham P."/>
            <person name="Chu M.C."/>
            <person name="Andersen G.L."/>
        </authorList>
    </citation>
    <scope>NUCLEOTIDE SEQUENCE [LARGE SCALE GENOMIC DNA]</scope>
    <source>
        <strain>Nepal516</strain>
    </source>
</reference>
<reference key="2">
    <citation type="submission" date="2009-04" db="EMBL/GenBank/DDBJ databases">
        <title>Yersinia pestis Nepal516A whole genome shotgun sequencing project.</title>
        <authorList>
            <person name="Plunkett G. III"/>
            <person name="Anderson B.D."/>
            <person name="Baumler D.J."/>
            <person name="Burland V."/>
            <person name="Cabot E.L."/>
            <person name="Glasner J.D."/>
            <person name="Mau B."/>
            <person name="Neeno-Eckwall E."/>
            <person name="Perna N.T."/>
            <person name="Munk A.C."/>
            <person name="Tapia R."/>
            <person name="Green L.D."/>
            <person name="Rogers Y.C."/>
            <person name="Detter J.C."/>
            <person name="Bruce D.C."/>
            <person name="Brettin T.S."/>
        </authorList>
    </citation>
    <scope>NUCLEOTIDE SEQUENCE [LARGE SCALE GENOMIC DNA]</scope>
    <source>
        <strain>Nepal516</strain>
    </source>
</reference>
<feature type="chain" id="PRO_1000056720" description="Protein FdhE homolog">
    <location>
        <begin position="1"/>
        <end position="309"/>
    </location>
</feature>
<comment type="function">
    <text evidence="1">Necessary for formate dehydrogenase activity.</text>
</comment>
<comment type="subcellular location">
    <subcellularLocation>
        <location evidence="1">Cytoplasm</location>
    </subcellularLocation>
</comment>
<comment type="similarity">
    <text evidence="1">Belongs to the FdhE family.</text>
</comment>